<evidence type="ECO:0000250" key="1"/>
<evidence type="ECO:0000255" key="2"/>
<evidence type="ECO:0000256" key="3">
    <source>
        <dbReference type="SAM" id="MobiDB-lite"/>
    </source>
</evidence>
<feature type="transit peptide" description="Mitochondrion" evidence="2">
    <location>
        <begin position="1"/>
        <end position="44"/>
    </location>
</feature>
<feature type="chain" id="PRO_0000240389" description="Protein PET20, mitochondrial">
    <location>
        <begin position="45"/>
        <end position="267"/>
    </location>
</feature>
<feature type="region of interest" description="Disordered" evidence="3">
    <location>
        <begin position="243"/>
        <end position="267"/>
    </location>
</feature>
<feature type="compositionally biased region" description="Basic residues" evidence="3">
    <location>
        <begin position="246"/>
        <end position="267"/>
    </location>
</feature>
<reference key="1">
    <citation type="journal article" date="2004" name="Nature">
        <title>Genome evolution in yeasts.</title>
        <authorList>
            <person name="Dujon B."/>
            <person name="Sherman D."/>
            <person name="Fischer G."/>
            <person name="Durrens P."/>
            <person name="Casaregola S."/>
            <person name="Lafontaine I."/>
            <person name="de Montigny J."/>
            <person name="Marck C."/>
            <person name="Neuveglise C."/>
            <person name="Talla E."/>
            <person name="Goffard N."/>
            <person name="Frangeul L."/>
            <person name="Aigle M."/>
            <person name="Anthouard V."/>
            <person name="Babour A."/>
            <person name="Barbe V."/>
            <person name="Barnay S."/>
            <person name="Blanchin S."/>
            <person name="Beckerich J.-M."/>
            <person name="Beyne E."/>
            <person name="Bleykasten C."/>
            <person name="Boisrame A."/>
            <person name="Boyer J."/>
            <person name="Cattolico L."/>
            <person name="Confanioleri F."/>
            <person name="de Daruvar A."/>
            <person name="Despons L."/>
            <person name="Fabre E."/>
            <person name="Fairhead C."/>
            <person name="Ferry-Dumazet H."/>
            <person name="Groppi A."/>
            <person name="Hantraye F."/>
            <person name="Hennequin C."/>
            <person name="Jauniaux N."/>
            <person name="Joyet P."/>
            <person name="Kachouri R."/>
            <person name="Kerrest A."/>
            <person name="Koszul R."/>
            <person name="Lemaire M."/>
            <person name="Lesur I."/>
            <person name="Ma L."/>
            <person name="Muller H."/>
            <person name="Nicaud J.-M."/>
            <person name="Nikolski M."/>
            <person name="Oztas S."/>
            <person name="Ozier-Kalogeropoulos O."/>
            <person name="Pellenz S."/>
            <person name="Potier S."/>
            <person name="Richard G.-F."/>
            <person name="Straub M.-L."/>
            <person name="Suleau A."/>
            <person name="Swennen D."/>
            <person name="Tekaia F."/>
            <person name="Wesolowski-Louvel M."/>
            <person name="Westhof E."/>
            <person name="Wirth B."/>
            <person name="Zeniou-Meyer M."/>
            <person name="Zivanovic Y."/>
            <person name="Bolotin-Fukuhara M."/>
            <person name="Thierry A."/>
            <person name="Bouchier C."/>
            <person name="Caudron B."/>
            <person name="Scarpelli C."/>
            <person name="Gaillardin C."/>
            <person name="Weissenbach J."/>
            <person name="Wincker P."/>
            <person name="Souciet J.-L."/>
        </authorList>
    </citation>
    <scope>NUCLEOTIDE SEQUENCE [LARGE SCALE GENOMIC DNA]</scope>
    <source>
        <strain>ATCC 2001 / BCRC 20586 / JCM 3761 / NBRC 0622 / NRRL Y-65 / CBS 138</strain>
    </source>
</reference>
<accession>Q6FK07</accession>
<dbReference type="EMBL" id="CR380959">
    <property type="protein sequence ID" value="CAG62413.1"/>
    <property type="molecule type" value="Genomic_DNA"/>
</dbReference>
<dbReference type="RefSeq" id="XP_449437.1">
    <property type="nucleotide sequence ID" value="XM_449437.1"/>
</dbReference>
<dbReference type="FunCoup" id="Q6FK07">
    <property type="interactions" value="34"/>
</dbReference>
<dbReference type="STRING" id="284593.Q6FK07"/>
<dbReference type="EnsemblFungi" id="CAGL0M02101g-T">
    <property type="protein sequence ID" value="CAGL0M02101g-T-p1"/>
    <property type="gene ID" value="CAGL0M02101g"/>
</dbReference>
<dbReference type="KEGG" id="cgr:2891763"/>
<dbReference type="CGD" id="CAL0136269">
    <property type="gene designation" value="CAGL0M02101g"/>
</dbReference>
<dbReference type="VEuPathDB" id="FungiDB:CAGL0M02101g"/>
<dbReference type="eggNOG" id="ENOG502S1JN">
    <property type="taxonomic scope" value="Eukaryota"/>
</dbReference>
<dbReference type="HOGENOM" id="CLU_074423_0_0_1"/>
<dbReference type="InParanoid" id="Q6FK07"/>
<dbReference type="OMA" id="DPLPWIS"/>
<dbReference type="Proteomes" id="UP000002428">
    <property type="component" value="Chromosome M"/>
</dbReference>
<dbReference type="GO" id="GO:0005739">
    <property type="term" value="C:mitochondrion"/>
    <property type="evidence" value="ECO:0007669"/>
    <property type="project" value="UniProtKB-SubCell"/>
</dbReference>
<dbReference type="GO" id="GO:0009060">
    <property type="term" value="P:aerobic respiration"/>
    <property type="evidence" value="ECO:0007669"/>
    <property type="project" value="EnsemblFungi"/>
</dbReference>
<dbReference type="InterPro" id="IPR014804">
    <property type="entry name" value="Pet20-like"/>
</dbReference>
<dbReference type="Pfam" id="PF08692">
    <property type="entry name" value="Pet20"/>
    <property type="match status" value="1"/>
</dbReference>
<keyword id="KW-0496">Mitochondrion</keyword>
<keyword id="KW-1185">Reference proteome</keyword>
<keyword id="KW-0809">Transit peptide</keyword>
<name>PET20_CANGA</name>
<protein>
    <recommendedName>
        <fullName>Protein PET20, mitochondrial</fullName>
    </recommendedName>
</protein>
<sequence length="267" mass="29928">MSVSLVLCTWGGAARTARVYRVVKQAMIRTMFVRLRSAGQVRYQSSFSFPSSQSLLQKGQLGKKKRSVRKLGLGISDKKQYNSGVTSAAQEAGGAVRDLKSEKAQTKKKVYDYSTLPRVEQISDTKLKNMSTEVLYSGYRPLFFDVEPKNSQEGKTLYEFAMKLEEFQEAMSPWVSSATGSEMYAEWDNVPGDVIKDLKPFTPPVVNSRKLNGATGENANDFDEQGNFQKKAFFDKVQSILNRNGKGGRKRPGVTVLKHLKKLKEQN</sequence>
<gene>
    <name type="primary">PET20</name>
    <name type="ordered locus">CAGL0M02101g</name>
</gene>
<organism>
    <name type="scientific">Candida glabrata (strain ATCC 2001 / BCRC 20586 / JCM 3761 / NBRC 0622 / NRRL Y-65 / CBS 138)</name>
    <name type="common">Yeast</name>
    <name type="synonym">Nakaseomyces glabratus</name>
    <dbReference type="NCBI Taxonomy" id="284593"/>
    <lineage>
        <taxon>Eukaryota</taxon>
        <taxon>Fungi</taxon>
        <taxon>Dikarya</taxon>
        <taxon>Ascomycota</taxon>
        <taxon>Saccharomycotina</taxon>
        <taxon>Saccharomycetes</taxon>
        <taxon>Saccharomycetales</taxon>
        <taxon>Saccharomycetaceae</taxon>
        <taxon>Nakaseomyces</taxon>
    </lineage>
</organism>
<comment type="function">
    <text evidence="1">Required for respiratory growth, stability of the mitochondrial genome and for proper assembly or maintenance of mitochondrial proteins.</text>
</comment>
<comment type="subcellular location">
    <subcellularLocation>
        <location evidence="1">Mitochondrion</location>
    </subcellularLocation>
</comment>
<proteinExistence type="inferred from homology"/>